<proteinExistence type="inferred from homology"/>
<comment type="function">
    <text evidence="1">Binds to DNA and alters its conformation. May be involved in regulation of gene expression, nucleoid organization and DNA protection.</text>
</comment>
<comment type="subunit">
    <text evidence="1">Homodimer.</text>
</comment>
<comment type="subcellular location">
    <subcellularLocation>
        <location evidence="1">Cytoplasm</location>
        <location evidence="1">Nucleoid</location>
    </subcellularLocation>
</comment>
<comment type="similarity">
    <text evidence="1">Belongs to the YbaB/EbfC family.</text>
</comment>
<sequence length="108" mass="11877">MMKGGMAGLMKQAQQMQEKMQKMQEELANAEVTGQSGAGLVSVVMTGRHDVKRVSLDDSLMQEDKEILEDLIAAAVNDAVRKIEQNNQEKMSGFTSGMQLPPGFKMPF</sequence>
<feature type="chain" id="PRO_1000119327" description="Nucleoid-associated protein PLES_37951">
    <location>
        <begin position="1"/>
        <end position="108"/>
    </location>
</feature>
<feature type="region of interest" description="Disordered" evidence="2">
    <location>
        <begin position="1"/>
        <end position="25"/>
    </location>
</feature>
<feature type="region of interest" description="Disordered" evidence="2">
    <location>
        <begin position="87"/>
        <end position="108"/>
    </location>
</feature>
<feature type="compositionally biased region" description="Polar residues" evidence="2">
    <location>
        <begin position="87"/>
        <end position="98"/>
    </location>
</feature>
<name>Y3795_PSEA8</name>
<evidence type="ECO:0000255" key="1">
    <source>
        <dbReference type="HAMAP-Rule" id="MF_00274"/>
    </source>
</evidence>
<evidence type="ECO:0000256" key="2">
    <source>
        <dbReference type="SAM" id="MobiDB-lite"/>
    </source>
</evidence>
<organism>
    <name type="scientific">Pseudomonas aeruginosa (strain LESB58)</name>
    <dbReference type="NCBI Taxonomy" id="557722"/>
    <lineage>
        <taxon>Bacteria</taxon>
        <taxon>Pseudomonadati</taxon>
        <taxon>Pseudomonadota</taxon>
        <taxon>Gammaproteobacteria</taxon>
        <taxon>Pseudomonadales</taxon>
        <taxon>Pseudomonadaceae</taxon>
        <taxon>Pseudomonas</taxon>
    </lineage>
</organism>
<reference key="1">
    <citation type="journal article" date="2009" name="Genome Res.">
        <title>Newly introduced genomic prophage islands are critical determinants of in vivo competitiveness in the Liverpool epidemic strain of Pseudomonas aeruginosa.</title>
        <authorList>
            <person name="Winstanley C."/>
            <person name="Langille M.G.I."/>
            <person name="Fothergill J.L."/>
            <person name="Kukavica-Ibrulj I."/>
            <person name="Paradis-Bleau C."/>
            <person name="Sanschagrin F."/>
            <person name="Thomson N.R."/>
            <person name="Winsor G.L."/>
            <person name="Quail M.A."/>
            <person name="Lennard N."/>
            <person name="Bignell A."/>
            <person name="Clarke L."/>
            <person name="Seeger K."/>
            <person name="Saunders D."/>
            <person name="Harris D."/>
            <person name="Parkhill J."/>
            <person name="Hancock R.E.W."/>
            <person name="Brinkman F.S.L."/>
            <person name="Levesque R.C."/>
        </authorList>
    </citation>
    <scope>NUCLEOTIDE SEQUENCE [LARGE SCALE GENOMIC DNA]</scope>
    <source>
        <strain>LESB58</strain>
    </source>
</reference>
<protein>
    <recommendedName>
        <fullName evidence="1">Nucleoid-associated protein PLES_37951</fullName>
    </recommendedName>
</protein>
<dbReference type="EMBL" id="FM209186">
    <property type="protein sequence ID" value="CAW28522.1"/>
    <property type="molecule type" value="Genomic_DNA"/>
</dbReference>
<dbReference type="RefSeq" id="WP_003087236.1">
    <property type="nucleotide sequence ID" value="NC_011770.1"/>
</dbReference>
<dbReference type="SMR" id="B7UVI9"/>
<dbReference type="KEGG" id="pag:PLES_37951"/>
<dbReference type="HOGENOM" id="CLU_140930_0_0_6"/>
<dbReference type="GO" id="GO:0043590">
    <property type="term" value="C:bacterial nucleoid"/>
    <property type="evidence" value="ECO:0007669"/>
    <property type="project" value="UniProtKB-UniRule"/>
</dbReference>
<dbReference type="GO" id="GO:0005829">
    <property type="term" value="C:cytosol"/>
    <property type="evidence" value="ECO:0007669"/>
    <property type="project" value="TreeGrafter"/>
</dbReference>
<dbReference type="GO" id="GO:0003677">
    <property type="term" value="F:DNA binding"/>
    <property type="evidence" value="ECO:0007669"/>
    <property type="project" value="UniProtKB-UniRule"/>
</dbReference>
<dbReference type="FunFam" id="3.30.1310.10:FF:000001">
    <property type="entry name" value="Nucleoid-associated protein YbaB"/>
    <property type="match status" value="1"/>
</dbReference>
<dbReference type="Gene3D" id="3.30.1310.10">
    <property type="entry name" value="Nucleoid-associated protein YbaB-like domain"/>
    <property type="match status" value="1"/>
</dbReference>
<dbReference type="HAMAP" id="MF_00274">
    <property type="entry name" value="DNA_YbaB_EbfC"/>
    <property type="match status" value="1"/>
</dbReference>
<dbReference type="InterPro" id="IPR036894">
    <property type="entry name" value="YbaB-like_sf"/>
</dbReference>
<dbReference type="InterPro" id="IPR004401">
    <property type="entry name" value="YbaB/EbfC"/>
</dbReference>
<dbReference type="NCBIfam" id="TIGR00103">
    <property type="entry name" value="DNA_YbaB_EbfC"/>
    <property type="match status" value="1"/>
</dbReference>
<dbReference type="PANTHER" id="PTHR33449">
    <property type="entry name" value="NUCLEOID-ASSOCIATED PROTEIN YBAB"/>
    <property type="match status" value="1"/>
</dbReference>
<dbReference type="PANTHER" id="PTHR33449:SF1">
    <property type="entry name" value="NUCLEOID-ASSOCIATED PROTEIN YBAB"/>
    <property type="match status" value="1"/>
</dbReference>
<dbReference type="Pfam" id="PF02575">
    <property type="entry name" value="YbaB_DNA_bd"/>
    <property type="match status" value="1"/>
</dbReference>
<dbReference type="PIRSF" id="PIRSF004555">
    <property type="entry name" value="UCP004555"/>
    <property type="match status" value="1"/>
</dbReference>
<dbReference type="SUPFAM" id="SSF82607">
    <property type="entry name" value="YbaB-like"/>
    <property type="match status" value="1"/>
</dbReference>
<accession>B7UVI9</accession>
<keyword id="KW-0963">Cytoplasm</keyword>
<keyword id="KW-0238">DNA-binding</keyword>
<gene>
    <name type="ordered locus">PLES_37951</name>
</gene>